<dbReference type="EMBL" id="AL513382">
    <property type="protein sequence ID" value="CAD08334.1"/>
    <property type="molecule type" value="Genomic_DNA"/>
</dbReference>
<dbReference type="EMBL" id="AE014613">
    <property type="protein sequence ID" value="AAO69335.1"/>
    <property type="molecule type" value="Genomic_DNA"/>
</dbReference>
<dbReference type="RefSeq" id="NP_455702.1">
    <property type="nucleotide sequence ID" value="NC_003198.1"/>
</dbReference>
<dbReference type="RefSeq" id="WP_000587943.1">
    <property type="nucleotide sequence ID" value="NZ_WSUR01000030.1"/>
</dbReference>
<dbReference type="SMR" id="P67367"/>
<dbReference type="STRING" id="220341.gene:17585214"/>
<dbReference type="ESTHER" id="salty-ycfp">
    <property type="family name" value="abh_upf00227"/>
</dbReference>
<dbReference type="KEGG" id="stt:t1710"/>
<dbReference type="KEGG" id="sty:STY1250"/>
<dbReference type="PATRIC" id="fig|220341.7.peg.1252"/>
<dbReference type="eggNOG" id="COG3150">
    <property type="taxonomic scope" value="Bacteria"/>
</dbReference>
<dbReference type="HOGENOM" id="CLU_128769_0_0_6"/>
<dbReference type="OMA" id="KCVSEFR"/>
<dbReference type="OrthoDB" id="6469735at2"/>
<dbReference type="Proteomes" id="UP000000541">
    <property type="component" value="Chromosome"/>
</dbReference>
<dbReference type="Proteomes" id="UP000002670">
    <property type="component" value="Chromosome"/>
</dbReference>
<dbReference type="FunFam" id="3.40.50.1820:FF:000007">
    <property type="entry name" value="UPF0227 protein YcfP"/>
    <property type="match status" value="1"/>
</dbReference>
<dbReference type="Gene3D" id="3.40.50.1820">
    <property type="entry name" value="alpha/beta hydrolase"/>
    <property type="match status" value="1"/>
</dbReference>
<dbReference type="HAMAP" id="MF_01047">
    <property type="entry name" value="UPF0227"/>
    <property type="match status" value="1"/>
</dbReference>
<dbReference type="InterPro" id="IPR029058">
    <property type="entry name" value="AB_hydrolase_fold"/>
</dbReference>
<dbReference type="InterPro" id="IPR022987">
    <property type="entry name" value="UPF0227"/>
</dbReference>
<dbReference type="InterPro" id="IPR008886">
    <property type="entry name" value="UPF0227/Esterase_YqiA"/>
</dbReference>
<dbReference type="NCBIfam" id="NF003431">
    <property type="entry name" value="PRK04940.1"/>
    <property type="match status" value="1"/>
</dbReference>
<dbReference type="PANTHER" id="PTHR35602">
    <property type="entry name" value="ESTERASE YQIA-RELATED"/>
    <property type="match status" value="1"/>
</dbReference>
<dbReference type="PANTHER" id="PTHR35602:SF2">
    <property type="entry name" value="UPF0227 PROTEIN YCFP"/>
    <property type="match status" value="1"/>
</dbReference>
<dbReference type="Pfam" id="PF05728">
    <property type="entry name" value="UPF0227"/>
    <property type="match status" value="1"/>
</dbReference>
<dbReference type="SUPFAM" id="SSF53474">
    <property type="entry name" value="alpha/beta-Hydrolases"/>
    <property type="match status" value="1"/>
</dbReference>
<proteinExistence type="inferred from homology"/>
<reference key="1">
    <citation type="journal article" date="2001" name="Nature">
        <title>Complete genome sequence of a multiple drug resistant Salmonella enterica serovar Typhi CT18.</title>
        <authorList>
            <person name="Parkhill J."/>
            <person name="Dougan G."/>
            <person name="James K.D."/>
            <person name="Thomson N.R."/>
            <person name="Pickard D."/>
            <person name="Wain J."/>
            <person name="Churcher C.M."/>
            <person name="Mungall K.L."/>
            <person name="Bentley S.D."/>
            <person name="Holden M.T.G."/>
            <person name="Sebaihia M."/>
            <person name="Baker S."/>
            <person name="Basham D."/>
            <person name="Brooks K."/>
            <person name="Chillingworth T."/>
            <person name="Connerton P."/>
            <person name="Cronin A."/>
            <person name="Davis P."/>
            <person name="Davies R.M."/>
            <person name="Dowd L."/>
            <person name="White N."/>
            <person name="Farrar J."/>
            <person name="Feltwell T."/>
            <person name="Hamlin N."/>
            <person name="Haque A."/>
            <person name="Hien T.T."/>
            <person name="Holroyd S."/>
            <person name="Jagels K."/>
            <person name="Krogh A."/>
            <person name="Larsen T.S."/>
            <person name="Leather S."/>
            <person name="Moule S."/>
            <person name="O'Gaora P."/>
            <person name="Parry C."/>
            <person name="Quail M.A."/>
            <person name="Rutherford K.M."/>
            <person name="Simmonds M."/>
            <person name="Skelton J."/>
            <person name="Stevens K."/>
            <person name="Whitehead S."/>
            <person name="Barrell B.G."/>
        </authorList>
    </citation>
    <scope>NUCLEOTIDE SEQUENCE [LARGE SCALE GENOMIC DNA]</scope>
    <source>
        <strain>CT18</strain>
    </source>
</reference>
<reference key="2">
    <citation type="journal article" date="2003" name="J. Bacteriol.">
        <title>Comparative genomics of Salmonella enterica serovar Typhi strains Ty2 and CT18.</title>
        <authorList>
            <person name="Deng W."/>
            <person name="Liou S.-R."/>
            <person name="Plunkett G. III"/>
            <person name="Mayhew G.F."/>
            <person name="Rose D.J."/>
            <person name="Burland V."/>
            <person name="Kodoyianni V."/>
            <person name="Schwartz D.C."/>
            <person name="Blattner F.R."/>
        </authorList>
    </citation>
    <scope>NUCLEOTIDE SEQUENCE [LARGE SCALE GENOMIC DNA]</scope>
    <source>
        <strain>ATCC 700931 / Ty2</strain>
    </source>
</reference>
<gene>
    <name evidence="1" type="primary">ycfP</name>
    <name type="ordered locus">STY1250</name>
    <name type="ordered locus">t1710</name>
</gene>
<evidence type="ECO:0000255" key="1">
    <source>
        <dbReference type="HAMAP-Rule" id="MF_01047"/>
    </source>
</evidence>
<organism>
    <name type="scientific">Salmonella typhi</name>
    <dbReference type="NCBI Taxonomy" id="90370"/>
    <lineage>
        <taxon>Bacteria</taxon>
        <taxon>Pseudomonadati</taxon>
        <taxon>Pseudomonadota</taxon>
        <taxon>Gammaproteobacteria</taxon>
        <taxon>Enterobacterales</taxon>
        <taxon>Enterobacteriaceae</taxon>
        <taxon>Salmonella</taxon>
    </lineage>
</organism>
<comment type="similarity">
    <text evidence="1">Belongs to the UPF0227 family.</text>
</comment>
<name>YCFP_SALTI</name>
<sequence length="180" mass="21077">MIIYLHGFDSNSPGNHEKVLQLQFIDPDVRLVSYSTRHPKHDMQHLLKEVDKMLQLNVDERPLICGVGLGGYWAERIGFLCDIRQVVFNPNLFPYENMEGKIDRPEEYADIATKCVTNFREKNRDRCLVILSRHDEALDSQRSAQALHPFYEIVWDEEQTHKFKNISPHLQRIKAFKTLG</sequence>
<accession>P67367</accession>
<accession>Q8XGQ0</accession>
<protein>
    <recommendedName>
        <fullName evidence="1">UPF0227 protein YcfP</fullName>
    </recommendedName>
</protein>
<feature type="chain" id="PRO_0000070321" description="UPF0227 protein YcfP">
    <location>
        <begin position="1"/>
        <end position="180"/>
    </location>
</feature>